<comment type="subcellular location">
    <subcellularLocation>
        <location evidence="4">Membrane</location>
        <topology evidence="4">Multi-pass membrane protein</topology>
    </subcellularLocation>
</comment>
<comment type="developmental stage">
    <text evidence="3">Expressed in late sporogonial stages.</text>
</comment>
<comment type="similarity">
    <text evidence="4">Belongs to the ABC transporter superfamily.</text>
</comment>
<name>YBD4_ENCCU</name>
<organism>
    <name type="scientific">Encephalitozoon cuniculi (strain GB-M1)</name>
    <name type="common">Microsporidian parasite</name>
    <dbReference type="NCBI Taxonomy" id="284813"/>
    <lineage>
        <taxon>Eukaryota</taxon>
        <taxon>Fungi</taxon>
        <taxon>Fungi incertae sedis</taxon>
        <taxon>Microsporidia</taxon>
        <taxon>Unikaryonidae</taxon>
        <taxon>Encephalitozoon</taxon>
    </lineage>
</organism>
<protein>
    <recommendedName>
        <fullName>ABC transporter-like protein ECU11_1340</fullName>
    </recommendedName>
</protein>
<accession>Q8SQU5</accession>
<sequence length="582" mass="65503">MKQHTLQLEGVTLDVPNQNLSSNEKYARLINGLTADFKSGNVYAFMGTSGSGKTTTLETIAGLVPSGSRTGGRILVDGQERNPDEFPYEFAYGDQLGYIIDELTVEEFVYYYVVSSLPEESKERVREKMDEVLENLLNIGHIRHNKMKNISGGEQKRANLARTFTKMLLLEGELKVVLLDEPTSELDAGLALKLGEFLRDYARRSNSIVLVTVHQPGAELYNTFDNLLFMNNGEKLYLGPSRDFIKFLGTKGIHNDGGPETNMEFLFSLFTKGSKMSKKYEKQLEQIAKEMNEEKKEEKKLRTSDDTEINFIPNLYVSFQMAIRQIIIDWRNREILYSLAMPIAMALFLVTGKYIYKDFSIATIKASMLSLSLYYVMNPSGLMNDKHYVTEESNRKLYGAAEVWFSSLISDTLVSILKYCIFFGIIYAFGLISMDHAFLGQVLMYTLGGTVSSMLFRSMASPLSTLGKVFNTTMVLMFQLSGALLGAGALLGALTLWISVIPEGSIPQEEIDAFISNFFDSTGSTGSTSIFSKVGSWVIRFICLVPKVVRSFLRILFLMFHPFAFFHSSILDAEKSSYKLFF</sequence>
<proteinExistence type="evidence at protein level"/>
<dbReference type="EMBL" id="AL590450">
    <property type="protein sequence ID" value="CAD26044.1"/>
    <property type="molecule type" value="Genomic_DNA"/>
</dbReference>
<dbReference type="RefSeq" id="NP_586440.1">
    <property type="nucleotide sequence ID" value="NM_001042273.1"/>
</dbReference>
<dbReference type="SMR" id="Q8SQU5"/>
<dbReference type="TCDB" id="3.A.1.204.14">
    <property type="family name" value="the atp-binding cassette (abc) superfamily"/>
</dbReference>
<dbReference type="GeneID" id="860094"/>
<dbReference type="KEGG" id="ecu:ECU11_1340"/>
<dbReference type="VEuPathDB" id="MicrosporidiaDB:ECU11_1340"/>
<dbReference type="HOGENOM" id="CLU_020421_0_0_1"/>
<dbReference type="InParanoid" id="Q8SQU5"/>
<dbReference type="OMA" id="NTIAVWI"/>
<dbReference type="OrthoDB" id="2196280at2759"/>
<dbReference type="Proteomes" id="UP000000819">
    <property type="component" value="Chromosome XI"/>
</dbReference>
<dbReference type="GO" id="GO:0016020">
    <property type="term" value="C:membrane"/>
    <property type="evidence" value="ECO:0007669"/>
    <property type="project" value="UniProtKB-SubCell"/>
</dbReference>
<dbReference type="GO" id="GO:0005524">
    <property type="term" value="F:ATP binding"/>
    <property type="evidence" value="ECO:0007669"/>
    <property type="project" value="UniProtKB-KW"/>
</dbReference>
<dbReference type="GO" id="GO:0016887">
    <property type="term" value="F:ATP hydrolysis activity"/>
    <property type="evidence" value="ECO:0007669"/>
    <property type="project" value="InterPro"/>
</dbReference>
<dbReference type="GO" id="GO:0042626">
    <property type="term" value="F:ATPase-coupled transmembrane transporter activity"/>
    <property type="evidence" value="ECO:0007669"/>
    <property type="project" value="TreeGrafter"/>
</dbReference>
<dbReference type="CDD" id="cd03234">
    <property type="entry name" value="ABCG_White"/>
    <property type="match status" value="1"/>
</dbReference>
<dbReference type="Gene3D" id="3.40.50.300">
    <property type="entry name" value="P-loop containing nucleotide triphosphate hydrolases"/>
    <property type="match status" value="1"/>
</dbReference>
<dbReference type="InterPro" id="IPR003593">
    <property type="entry name" value="AAA+_ATPase"/>
</dbReference>
<dbReference type="InterPro" id="IPR003439">
    <property type="entry name" value="ABC_transporter-like_ATP-bd"/>
</dbReference>
<dbReference type="InterPro" id="IPR017871">
    <property type="entry name" value="ABC_transporter-like_CS"/>
</dbReference>
<dbReference type="InterPro" id="IPR050352">
    <property type="entry name" value="ABCG_transporters"/>
</dbReference>
<dbReference type="InterPro" id="IPR027417">
    <property type="entry name" value="P-loop_NTPase"/>
</dbReference>
<dbReference type="PANTHER" id="PTHR48041">
    <property type="entry name" value="ABC TRANSPORTER G FAMILY MEMBER 28"/>
    <property type="match status" value="1"/>
</dbReference>
<dbReference type="PANTHER" id="PTHR48041:SF139">
    <property type="entry name" value="PROTEIN SCARLET"/>
    <property type="match status" value="1"/>
</dbReference>
<dbReference type="Pfam" id="PF00005">
    <property type="entry name" value="ABC_tran"/>
    <property type="match status" value="1"/>
</dbReference>
<dbReference type="SMART" id="SM00382">
    <property type="entry name" value="AAA"/>
    <property type="match status" value="1"/>
</dbReference>
<dbReference type="SUPFAM" id="SSF52540">
    <property type="entry name" value="P-loop containing nucleoside triphosphate hydrolases"/>
    <property type="match status" value="1"/>
</dbReference>
<dbReference type="PROSITE" id="PS00211">
    <property type="entry name" value="ABC_TRANSPORTER_1"/>
    <property type="match status" value="1"/>
</dbReference>
<dbReference type="PROSITE" id="PS50893">
    <property type="entry name" value="ABC_TRANSPORTER_2"/>
    <property type="match status" value="1"/>
</dbReference>
<keyword id="KW-0067">ATP-binding</keyword>
<keyword id="KW-0472">Membrane</keyword>
<keyword id="KW-0547">Nucleotide-binding</keyword>
<keyword id="KW-1185">Reference proteome</keyword>
<keyword id="KW-0812">Transmembrane</keyword>
<keyword id="KW-1133">Transmembrane helix</keyword>
<keyword id="KW-0813">Transport</keyword>
<gene>
    <name type="ordered locus">ECU11_1340</name>
</gene>
<reference key="1">
    <citation type="journal article" date="2001" name="Nature">
        <title>Genome sequence and gene compaction of the eukaryote parasite Encephalitozoon cuniculi.</title>
        <authorList>
            <person name="Katinka M.D."/>
            <person name="Duprat S."/>
            <person name="Cornillot E."/>
            <person name="Metenier G."/>
            <person name="Thomarat F."/>
            <person name="Prensier G."/>
            <person name="Barbe V."/>
            <person name="Peyretaillade E."/>
            <person name="Brottier P."/>
            <person name="Wincker P."/>
            <person name="Delbac F."/>
            <person name="El Alaoui H."/>
            <person name="Peyret P."/>
            <person name="Saurin W."/>
            <person name="Gouy M."/>
            <person name="Weissenbach J."/>
            <person name="Vivares C.P."/>
        </authorList>
    </citation>
    <scope>NUCLEOTIDE SEQUENCE [LARGE SCALE GENOMIC DNA]</scope>
    <source>
        <strain>GB-M1</strain>
    </source>
</reference>
<reference key="2">
    <citation type="journal article" date="2006" name="Proteomics">
        <title>Proteomic analysis of the eukaryotic parasite Encephalitozoon cuniculi (microsporidia): a reference map for proteins expressed in late sporogonial stages.</title>
        <authorList>
            <person name="Brosson D."/>
            <person name="Kuhn L."/>
            <person name="Delbac F."/>
            <person name="Garin J."/>
            <person name="Vivares C.P."/>
            <person name="Texier C."/>
        </authorList>
    </citation>
    <scope>IDENTIFICATION BY MASS SPECTROMETRY [LARGE SCALE ANALYSIS]</scope>
    <scope>DEVELOPMENTAL STAGE</scope>
</reference>
<feature type="chain" id="PRO_0000383107" description="ABC transporter-like protein ECU11_1340">
    <location>
        <begin position="1"/>
        <end position="582"/>
    </location>
</feature>
<feature type="transmembrane region" description="Helical" evidence="1">
    <location>
        <begin position="335"/>
        <end position="355"/>
    </location>
</feature>
<feature type="transmembrane region" description="Helical" evidence="1">
    <location>
        <begin position="359"/>
        <end position="378"/>
    </location>
</feature>
<feature type="transmembrane region" description="Helical" evidence="1">
    <location>
        <begin position="412"/>
        <end position="432"/>
    </location>
</feature>
<feature type="transmembrane region" description="Helical" evidence="1">
    <location>
        <begin position="436"/>
        <end position="456"/>
    </location>
</feature>
<feature type="transmembrane region" description="Helical" evidence="1">
    <location>
        <begin position="482"/>
        <end position="502"/>
    </location>
</feature>
<feature type="transmembrane region" description="Helical" evidence="1">
    <location>
        <begin position="551"/>
        <end position="571"/>
    </location>
</feature>
<feature type="domain" description="ABC transporter" evidence="2">
    <location>
        <begin position="15"/>
        <end position="257"/>
    </location>
</feature>
<feature type="domain" description="ABC transmembrane type-2">
    <location>
        <begin position="316" status="uncertain"/>
        <end position="519" status="uncertain"/>
    </location>
</feature>
<feature type="binding site" evidence="2">
    <location>
        <begin position="47"/>
        <end position="54"/>
    </location>
    <ligand>
        <name>ATP</name>
        <dbReference type="ChEBI" id="CHEBI:30616"/>
    </ligand>
</feature>
<evidence type="ECO:0000255" key="1"/>
<evidence type="ECO:0000255" key="2">
    <source>
        <dbReference type="PROSITE-ProRule" id="PRU00434"/>
    </source>
</evidence>
<evidence type="ECO:0000269" key="3">
    <source>
    </source>
</evidence>
<evidence type="ECO:0000305" key="4"/>